<evidence type="ECO:0000255" key="1"/>
<evidence type="ECO:0000255" key="2">
    <source>
        <dbReference type="PROSITE-ProRule" id="PRU00498"/>
    </source>
</evidence>
<evidence type="ECO:0000255" key="3">
    <source>
        <dbReference type="PROSITE-ProRule" id="PRU00521"/>
    </source>
</evidence>
<evidence type="ECO:0000269" key="4">
    <source>
    </source>
</evidence>
<evidence type="ECO:0000269" key="5">
    <source>
    </source>
</evidence>
<evidence type="ECO:0000269" key="6">
    <source>
    </source>
</evidence>
<evidence type="ECO:0000303" key="7">
    <source>
    </source>
</evidence>
<evidence type="ECO:0000305" key="8"/>
<evidence type="ECO:0000312" key="9">
    <source>
        <dbReference type="EMBL" id="AFJ42569.1"/>
    </source>
</evidence>
<evidence type="ECO:0000312" key="10">
    <source>
        <dbReference type="Proteomes" id="UP000001940"/>
    </source>
</evidence>
<evidence type="ECO:0000312" key="11">
    <source>
        <dbReference type="WormBase" id="T07D10.2a"/>
    </source>
</evidence>
<feature type="chain" id="PRO_0000438124" description="Nematocin receptor 1">
    <location>
        <begin position="1"/>
        <end position="379"/>
    </location>
</feature>
<feature type="topological domain" description="Extracellular" evidence="8">
    <location>
        <begin position="19"/>
        <end position="48"/>
    </location>
</feature>
<feature type="transmembrane region" description="Helical; Name=1" evidence="1">
    <location>
        <begin position="49"/>
        <end position="69"/>
    </location>
</feature>
<feature type="topological domain" description="Cytoplasmic" evidence="8">
    <location>
        <begin position="70"/>
        <end position="95"/>
    </location>
</feature>
<feature type="transmembrane region" description="Helical; Name=2" evidence="1">
    <location>
        <begin position="96"/>
        <end position="116"/>
    </location>
</feature>
<feature type="topological domain" description="Extracellular" evidence="8">
    <location>
        <begin position="117"/>
        <end position="124"/>
    </location>
</feature>
<feature type="transmembrane region" description="Helical; Name=3" evidence="1">
    <location>
        <begin position="125"/>
        <end position="145"/>
    </location>
</feature>
<feature type="topological domain" description="Cytoplasmic" evidence="8">
    <location>
        <begin position="146"/>
        <end position="168"/>
    </location>
</feature>
<feature type="transmembrane region" description="Helical; Name=4" evidence="1">
    <location>
        <begin position="169"/>
        <end position="189"/>
    </location>
</feature>
<feature type="topological domain" description="Extracellular" evidence="8">
    <location>
        <begin position="190"/>
        <end position="207"/>
    </location>
</feature>
<feature type="transmembrane region" description="Helical; Name=5" evidence="1">
    <location>
        <begin position="208"/>
        <end position="228"/>
    </location>
</feature>
<feature type="topological domain" description="Cytoplasmic" evidence="8">
    <location>
        <begin position="229"/>
        <end position="289"/>
    </location>
</feature>
<feature type="transmembrane region" description="Helical; Name=6" evidence="1">
    <location>
        <begin position="290"/>
        <end position="310"/>
    </location>
</feature>
<feature type="topological domain" description="Extracellular" evidence="8">
    <location>
        <begin position="311"/>
        <end position="320"/>
    </location>
</feature>
<feature type="transmembrane region" description="Helical; Name=7" evidence="1">
    <location>
        <begin position="321"/>
        <end position="343"/>
    </location>
</feature>
<feature type="topological domain" description="Cytoplasmic" evidence="8">
    <location>
        <begin position="344"/>
        <end position="379"/>
    </location>
</feature>
<feature type="glycosylation site" description="N-linked (GlcNAc...) asparagine" evidence="2">
    <location>
        <position position="32"/>
    </location>
</feature>
<feature type="glycosylation site" description="N-linked (GlcNAc...) asparagine" evidence="2">
    <location>
        <position position="199"/>
    </location>
</feature>
<feature type="glycosylation site" description="N-linked (GlcNAc...) asparagine" evidence="2">
    <location>
        <position position="319"/>
    </location>
</feature>
<feature type="disulfide bond" evidence="3">
    <location>
        <begin position="123"/>
        <end position="196"/>
    </location>
</feature>
<gene>
    <name evidence="7" type="primary">ntr-1</name>
    <name evidence="11" type="ORF">T07D10.2</name>
</gene>
<dbReference type="EMBL" id="JQ277731">
    <property type="protein sequence ID" value="AFJ42569.1"/>
    <property type="molecule type" value="mRNA"/>
</dbReference>
<dbReference type="EMBL" id="BX284601">
    <property type="protein sequence ID" value="CAB04712.1"/>
    <property type="molecule type" value="Genomic_DNA"/>
</dbReference>
<dbReference type="PIR" id="T24654">
    <property type="entry name" value="T24654"/>
</dbReference>
<dbReference type="RefSeq" id="NP_493193.1">
    <property type="nucleotide sequence ID" value="NM_060792.2"/>
</dbReference>
<dbReference type="SMR" id="O02300"/>
<dbReference type="DIP" id="DIP-26414N"/>
<dbReference type="FunCoup" id="O02300">
    <property type="interactions" value="51"/>
</dbReference>
<dbReference type="IntAct" id="O02300">
    <property type="interactions" value="1"/>
</dbReference>
<dbReference type="STRING" id="6239.T07D10.2.1"/>
<dbReference type="GlyCosmos" id="O02300">
    <property type="glycosylation" value="3 sites, No reported glycans"/>
</dbReference>
<dbReference type="PaxDb" id="6239-T07D10.2"/>
<dbReference type="EnsemblMetazoa" id="T07D10.2a.1">
    <property type="protein sequence ID" value="T07D10.2a.1"/>
    <property type="gene ID" value="WBGene00011582"/>
</dbReference>
<dbReference type="GeneID" id="188227"/>
<dbReference type="KEGG" id="cel:CELE_T07D10.2"/>
<dbReference type="UCSC" id="T07D10.2">
    <property type="organism name" value="c. elegans"/>
</dbReference>
<dbReference type="AGR" id="WB:WBGene00011582"/>
<dbReference type="CTD" id="188227"/>
<dbReference type="WormBase" id="T07D10.2a">
    <property type="protein sequence ID" value="CE13377"/>
    <property type="gene ID" value="WBGene00011582"/>
    <property type="gene designation" value="ntr-1"/>
</dbReference>
<dbReference type="eggNOG" id="KOG3656">
    <property type="taxonomic scope" value="Eukaryota"/>
</dbReference>
<dbReference type="GeneTree" id="ENSGT00970000195859"/>
<dbReference type="HOGENOM" id="CLU_009579_15_0_1"/>
<dbReference type="InParanoid" id="O02300"/>
<dbReference type="OMA" id="MQDSTHQ"/>
<dbReference type="OrthoDB" id="5987909at2759"/>
<dbReference type="PhylomeDB" id="O02300"/>
<dbReference type="PRO" id="PR:O02300"/>
<dbReference type="Proteomes" id="UP000001940">
    <property type="component" value="Chromosome I"/>
</dbReference>
<dbReference type="Bgee" id="WBGene00011582">
    <property type="expression patterns" value="Expressed in larva"/>
</dbReference>
<dbReference type="ExpressionAtlas" id="O02300">
    <property type="expression patterns" value="baseline and differential"/>
</dbReference>
<dbReference type="GO" id="GO:0016020">
    <property type="term" value="C:membrane"/>
    <property type="evidence" value="ECO:0000318"/>
    <property type="project" value="GO_Central"/>
</dbReference>
<dbReference type="GO" id="GO:0005886">
    <property type="term" value="C:plasma membrane"/>
    <property type="evidence" value="ECO:0007669"/>
    <property type="project" value="UniProtKB-SubCell"/>
</dbReference>
<dbReference type="GO" id="GO:0004930">
    <property type="term" value="F:G protein-coupled receptor activity"/>
    <property type="evidence" value="ECO:0007669"/>
    <property type="project" value="UniProtKB-KW"/>
</dbReference>
<dbReference type="CDD" id="cd15196">
    <property type="entry name" value="7tmA_Vasopressin_Oxytocin"/>
    <property type="match status" value="1"/>
</dbReference>
<dbReference type="FunFam" id="1.20.1070.10:FF:000474">
    <property type="entry name" value="Nematocin receptor 2"/>
    <property type="match status" value="1"/>
</dbReference>
<dbReference type="Gene3D" id="1.20.1070.10">
    <property type="entry name" value="Rhodopsin 7-helix transmembrane proteins"/>
    <property type="match status" value="1"/>
</dbReference>
<dbReference type="InterPro" id="IPR000276">
    <property type="entry name" value="GPCR_Rhodpsn"/>
</dbReference>
<dbReference type="InterPro" id="IPR017452">
    <property type="entry name" value="GPCR_Rhodpsn_7TM"/>
</dbReference>
<dbReference type="InterPro" id="IPR052665">
    <property type="entry name" value="Neuropeptide-GPCR"/>
</dbReference>
<dbReference type="PANTHER" id="PTHR24224">
    <property type="entry name" value="CARDIOACCELERATORY PEPTIDE RECEPTOR-RELATED"/>
    <property type="match status" value="1"/>
</dbReference>
<dbReference type="PANTHER" id="PTHR24224:SF6">
    <property type="entry name" value="CARDIOACCELERATORY PEPTIDE RECEPTOR-RELATED"/>
    <property type="match status" value="1"/>
</dbReference>
<dbReference type="Pfam" id="PF00001">
    <property type="entry name" value="7tm_1"/>
    <property type="match status" value="1"/>
</dbReference>
<dbReference type="PRINTS" id="PR00237">
    <property type="entry name" value="GPCRRHODOPSN"/>
</dbReference>
<dbReference type="SUPFAM" id="SSF81321">
    <property type="entry name" value="Family A G protein-coupled receptor-like"/>
    <property type="match status" value="1"/>
</dbReference>
<dbReference type="PROSITE" id="PS00237">
    <property type="entry name" value="G_PROTEIN_RECEP_F1_1"/>
    <property type="match status" value="1"/>
</dbReference>
<dbReference type="PROSITE" id="PS50262">
    <property type="entry name" value="G_PROTEIN_RECEP_F1_2"/>
    <property type="match status" value="1"/>
</dbReference>
<name>NTR1_CAEEL</name>
<proteinExistence type="evidence at transcript level"/>
<organism evidence="10">
    <name type="scientific">Caenorhabditis elegans</name>
    <dbReference type="NCBI Taxonomy" id="6239"/>
    <lineage>
        <taxon>Eukaryota</taxon>
        <taxon>Metazoa</taxon>
        <taxon>Ecdysozoa</taxon>
        <taxon>Nematoda</taxon>
        <taxon>Chromadorea</taxon>
        <taxon>Rhabditida</taxon>
        <taxon>Rhabditina</taxon>
        <taxon>Rhabditomorpha</taxon>
        <taxon>Rhabditoidea</taxon>
        <taxon>Rhabditidae</taxon>
        <taxon>Peloderinae</taxon>
        <taxon>Caenorhabditis</taxon>
    </lineage>
</organism>
<comment type="function">
    <text evidence="5 6">Receptor for nematocin (PubMed:23112335, PubMed:23112336). The activity of this receptor is mediated by G proteins which activate a phosphatidylinositol-calcium second messenger system (PubMed:23112335, PubMed:23112336). The activity of this receptor may be modulated by ntr-2, leading to reduced intracellular cAMP production (PubMed:23112335). Plays a role in gustatory associative learning (PubMed:23112336). Also plays a role in male mating behavior (PubMed:23112335).</text>
</comment>
<comment type="subcellular location">
    <subcellularLocation>
        <location evidence="4 5">Cell membrane</location>
        <topology evidence="1">Multi-pass membrane protein</topology>
    </subcellularLocation>
</comment>
<comment type="tissue specificity">
    <text evidence="4 5">Detected in the left ASE gustatory neuron, the chemosensory neuron pairs ASH and ADF, and the PQR tail neuron (PubMed:23112336). In males, detected in hook and tail sensory neurons involved in vulval sensing and hermaphrodite contact, and in spicule protractor muscles (PubMed:23112335).</text>
</comment>
<comment type="disruption phenotype">
    <text evidence="5">Viable and fertile (PubMed:23112336). Gustatory associative learning in response to salt cues is disrupted (PubMed:23112336). Males have reduced reproductive success, due to a range of aberrant mating behaviors (PubMed:23112335). Double knockouts with ntr-2 partially rescue the reproductive phenotypes (PubMed:23112335).</text>
</comment>
<comment type="similarity">
    <text evidence="8">Belongs to the G-protein coupled receptor 1 family. Vasopressin/oxytocin receptor subfamily.</text>
</comment>
<protein>
    <recommendedName>
        <fullName evidence="7">Nematocin receptor 1</fullName>
    </recommendedName>
</protein>
<sequence length="379" mass="43077">MGAFFPVILLTPTPISSAHNLYLFQMLELQENITDSQPMDPPSLEIMMLHHLMIILVTLFGNTLLIYVIYKNNAVLRRKRVTPVQMLMLHMCAADILFALISVGPTMAITATVPFFYGPNLLCKLTKFLQVIPMYASSFLLVAISADRYQAICRPLASMKSSIYNRPALYSGIAWTAAILFSTPQLYLFEKRNGDCSENYTTALQYQLYVCLFNSVVWLLPSAIAGWLYLCVCKAVWKSTSFSSSLRNNMKKMEHMKLTEKNGGMQAHHKGATMQCVELDRRRVQTVKLTLTIVAANFVLWAPFCITSVIDAVWPTAINSTFATYIMFFGNLNSCMNPWLWFHFNRKQLKRACPCRKSSEPLIQSLVYVHVMTSEQSDF</sequence>
<keyword id="KW-0085">Behavior</keyword>
<keyword id="KW-1003">Cell membrane</keyword>
<keyword id="KW-1015">Disulfide bond</keyword>
<keyword id="KW-0297">G-protein coupled receptor</keyword>
<keyword id="KW-0325">Glycoprotein</keyword>
<keyword id="KW-0472">Membrane</keyword>
<keyword id="KW-0675">Receptor</keyword>
<keyword id="KW-1185">Reference proteome</keyword>
<keyword id="KW-0807">Transducer</keyword>
<keyword id="KW-0812">Transmembrane</keyword>
<keyword id="KW-1133">Transmembrane helix</keyword>
<accession>O02300</accession>
<reference evidence="9" key="1">
    <citation type="journal article" date="2012" name="Science">
        <title>Vasopressin/oxytocin-related signaling regulates gustatory associative learning in C. elegans.</title>
        <authorList>
            <person name="Beets I."/>
            <person name="Janssen T."/>
            <person name="Meelkop E."/>
            <person name="Temmerman L."/>
            <person name="Suetens N."/>
            <person name="Rademakers S."/>
            <person name="Jansen G."/>
            <person name="Schoofs L."/>
        </authorList>
    </citation>
    <scope>NUCLEOTIDE SEQUENCE [MRNA]</scope>
    <scope>FUNCTION</scope>
    <scope>SUBCELLULAR LOCATION</scope>
    <scope>TISSUE SPECIFICITY</scope>
    <scope>DISRUPTION PHENOTYPE</scope>
</reference>
<reference evidence="10" key="2">
    <citation type="journal article" date="1998" name="Science">
        <title>Genome sequence of the nematode C. elegans: a platform for investigating biology.</title>
        <authorList>
            <consortium name="The C. elegans sequencing consortium"/>
        </authorList>
    </citation>
    <scope>NUCLEOTIDE SEQUENCE [LARGE SCALE GENOMIC DNA]</scope>
    <source>
        <strain evidence="10">Bristol N2</strain>
    </source>
</reference>
<reference evidence="8" key="3">
    <citation type="journal article" date="2012" name="Science">
        <title>Oxytocin/vasopressin-related peptides have an ancient role in reproductive behavior.</title>
        <authorList>
            <person name="Garrison J.L."/>
            <person name="Macosko E.Z."/>
            <person name="Bernstein S."/>
            <person name="Pokala N."/>
            <person name="Albrecht D.R."/>
            <person name="Bargmann C.I."/>
        </authorList>
    </citation>
    <scope>FUNCTION</scope>
    <scope>SUBCELLULAR LOCATION</scope>
    <scope>TISSUE SPECIFICITY</scope>
    <scope>DISRUPTION PHENOTYPE</scope>
</reference>